<reference key="1">
    <citation type="journal article" date="2007" name="Nat. Genet.">
        <title>Genomic analysis of Bartonella identifies type IV secretion systems as host adaptability factors.</title>
        <authorList>
            <person name="Saenz H.L."/>
            <person name="Engel P."/>
            <person name="Stoeckli M.C."/>
            <person name="Lanz C."/>
            <person name="Raddatz G."/>
            <person name="Vayssier-Taussat M."/>
            <person name="Birtles R."/>
            <person name="Schuster S.C."/>
            <person name="Dehio C."/>
        </authorList>
    </citation>
    <scope>NUCLEOTIDE SEQUENCE [LARGE SCALE GENOMIC DNA]</scope>
    <source>
        <strain>CIP 105476 / IBS 506</strain>
    </source>
</reference>
<gene>
    <name evidence="2" type="primary">ddl</name>
    <name type="ordered locus">BT_1588</name>
</gene>
<evidence type="ECO:0000250" key="1"/>
<evidence type="ECO:0000255" key="2">
    <source>
        <dbReference type="HAMAP-Rule" id="MF_00047"/>
    </source>
</evidence>
<accession>A9IWA2</accession>
<dbReference type="EC" id="6.3.2.4" evidence="2"/>
<dbReference type="EMBL" id="AM260525">
    <property type="protein sequence ID" value="CAK01927.1"/>
    <property type="molecule type" value="Genomic_DNA"/>
</dbReference>
<dbReference type="RefSeq" id="WP_012232053.1">
    <property type="nucleotide sequence ID" value="NC_010161.1"/>
</dbReference>
<dbReference type="SMR" id="A9IWA2"/>
<dbReference type="KEGG" id="btr:BT_1588"/>
<dbReference type="eggNOG" id="COG1181">
    <property type="taxonomic scope" value="Bacteria"/>
</dbReference>
<dbReference type="HOGENOM" id="CLU_039268_1_1_5"/>
<dbReference type="UniPathway" id="UPA00219"/>
<dbReference type="Proteomes" id="UP000001592">
    <property type="component" value="Chromosome"/>
</dbReference>
<dbReference type="GO" id="GO:0005737">
    <property type="term" value="C:cytoplasm"/>
    <property type="evidence" value="ECO:0007669"/>
    <property type="project" value="UniProtKB-SubCell"/>
</dbReference>
<dbReference type="GO" id="GO:0005524">
    <property type="term" value="F:ATP binding"/>
    <property type="evidence" value="ECO:0007669"/>
    <property type="project" value="UniProtKB-KW"/>
</dbReference>
<dbReference type="GO" id="GO:0008716">
    <property type="term" value="F:D-alanine-D-alanine ligase activity"/>
    <property type="evidence" value="ECO:0007669"/>
    <property type="project" value="UniProtKB-UniRule"/>
</dbReference>
<dbReference type="GO" id="GO:0046872">
    <property type="term" value="F:metal ion binding"/>
    <property type="evidence" value="ECO:0007669"/>
    <property type="project" value="UniProtKB-KW"/>
</dbReference>
<dbReference type="GO" id="GO:0071555">
    <property type="term" value="P:cell wall organization"/>
    <property type="evidence" value="ECO:0007669"/>
    <property type="project" value="UniProtKB-KW"/>
</dbReference>
<dbReference type="GO" id="GO:0009252">
    <property type="term" value="P:peptidoglycan biosynthetic process"/>
    <property type="evidence" value="ECO:0007669"/>
    <property type="project" value="UniProtKB-UniRule"/>
</dbReference>
<dbReference type="GO" id="GO:0008360">
    <property type="term" value="P:regulation of cell shape"/>
    <property type="evidence" value="ECO:0007669"/>
    <property type="project" value="UniProtKB-KW"/>
</dbReference>
<dbReference type="Gene3D" id="3.40.50.20">
    <property type="match status" value="1"/>
</dbReference>
<dbReference type="Gene3D" id="3.30.1490.20">
    <property type="entry name" value="ATP-grasp fold, A domain"/>
    <property type="match status" value="1"/>
</dbReference>
<dbReference type="Gene3D" id="3.30.470.20">
    <property type="entry name" value="ATP-grasp fold, B domain"/>
    <property type="match status" value="1"/>
</dbReference>
<dbReference type="HAMAP" id="MF_00047">
    <property type="entry name" value="Dala_Dala_lig"/>
    <property type="match status" value="1"/>
</dbReference>
<dbReference type="InterPro" id="IPR011761">
    <property type="entry name" value="ATP-grasp"/>
</dbReference>
<dbReference type="InterPro" id="IPR013815">
    <property type="entry name" value="ATP_grasp_subdomain_1"/>
</dbReference>
<dbReference type="InterPro" id="IPR000291">
    <property type="entry name" value="D-Ala_lig_Van_CS"/>
</dbReference>
<dbReference type="InterPro" id="IPR005905">
    <property type="entry name" value="D_ala_D_ala"/>
</dbReference>
<dbReference type="InterPro" id="IPR011095">
    <property type="entry name" value="Dala_Dala_lig_C"/>
</dbReference>
<dbReference type="InterPro" id="IPR011127">
    <property type="entry name" value="Dala_Dala_lig_N"/>
</dbReference>
<dbReference type="InterPro" id="IPR016185">
    <property type="entry name" value="PreATP-grasp_dom_sf"/>
</dbReference>
<dbReference type="NCBIfam" id="TIGR01205">
    <property type="entry name" value="D_ala_D_alaTIGR"/>
    <property type="match status" value="1"/>
</dbReference>
<dbReference type="NCBIfam" id="NF002378">
    <property type="entry name" value="PRK01372.1"/>
    <property type="match status" value="1"/>
</dbReference>
<dbReference type="PANTHER" id="PTHR23132">
    <property type="entry name" value="D-ALANINE--D-ALANINE LIGASE"/>
    <property type="match status" value="1"/>
</dbReference>
<dbReference type="PANTHER" id="PTHR23132:SF23">
    <property type="entry name" value="D-ALANINE--D-ALANINE LIGASE B"/>
    <property type="match status" value="1"/>
</dbReference>
<dbReference type="Pfam" id="PF07478">
    <property type="entry name" value="Dala_Dala_lig_C"/>
    <property type="match status" value="1"/>
</dbReference>
<dbReference type="Pfam" id="PF01820">
    <property type="entry name" value="Dala_Dala_lig_N"/>
    <property type="match status" value="1"/>
</dbReference>
<dbReference type="PIRSF" id="PIRSF039102">
    <property type="entry name" value="Ddl/VanB"/>
    <property type="match status" value="1"/>
</dbReference>
<dbReference type="SUPFAM" id="SSF56059">
    <property type="entry name" value="Glutathione synthetase ATP-binding domain-like"/>
    <property type="match status" value="1"/>
</dbReference>
<dbReference type="SUPFAM" id="SSF52440">
    <property type="entry name" value="PreATP-grasp domain"/>
    <property type="match status" value="1"/>
</dbReference>
<dbReference type="PROSITE" id="PS50975">
    <property type="entry name" value="ATP_GRASP"/>
    <property type="match status" value="1"/>
</dbReference>
<dbReference type="PROSITE" id="PS00843">
    <property type="entry name" value="DALA_DALA_LIGASE_1"/>
    <property type="match status" value="1"/>
</dbReference>
<dbReference type="PROSITE" id="PS00844">
    <property type="entry name" value="DALA_DALA_LIGASE_2"/>
    <property type="match status" value="1"/>
</dbReference>
<protein>
    <recommendedName>
        <fullName evidence="2">D-alanine--D-alanine ligase</fullName>
        <ecNumber evidence="2">6.3.2.4</ecNumber>
    </recommendedName>
    <alternativeName>
        <fullName evidence="2">D-Ala-D-Ala ligase</fullName>
    </alternativeName>
    <alternativeName>
        <fullName evidence="2">D-alanylalanine synthetase</fullName>
    </alternativeName>
</protein>
<organism>
    <name type="scientific">Bartonella tribocorum (strain CIP 105476 / IBS 506)</name>
    <dbReference type="NCBI Taxonomy" id="382640"/>
    <lineage>
        <taxon>Bacteria</taxon>
        <taxon>Pseudomonadati</taxon>
        <taxon>Pseudomonadota</taxon>
        <taxon>Alphaproteobacteria</taxon>
        <taxon>Hyphomicrobiales</taxon>
        <taxon>Bartonellaceae</taxon>
        <taxon>Bartonella</taxon>
    </lineage>
</organism>
<name>DDL_BART1</name>
<comment type="function">
    <text evidence="2">Cell wall formation.</text>
</comment>
<comment type="catalytic activity">
    <reaction evidence="2">
        <text>2 D-alanine + ATP = D-alanyl-D-alanine + ADP + phosphate + H(+)</text>
        <dbReference type="Rhea" id="RHEA:11224"/>
        <dbReference type="ChEBI" id="CHEBI:15378"/>
        <dbReference type="ChEBI" id="CHEBI:30616"/>
        <dbReference type="ChEBI" id="CHEBI:43474"/>
        <dbReference type="ChEBI" id="CHEBI:57416"/>
        <dbReference type="ChEBI" id="CHEBI:57822"/>
        <dbReference type="ChEBI" id="CHEBI:456216"/>
        <dbReference type="EC" id="6.3.2.4"/>
    </reaction>
</comment>
<comment type="cofactor">
    <cofactor evidence="1">
        <name>Mg(2+)</name>
        <dbReference type="ChEBI" id="CHEBI:18420"/>
    </cofactor>
    <cofactor evidence="1">
        <name>Mn(2+)</name>
        <dbReference type="ChEBI" id="CHEBI:29035"/>
    </cofactor>
    <text evidence="1">Binds 2 magnesium or manganese ions per subunit.</text>
</comment>
<comment type="pathway">
    <text evidence="2">Cell wall biogenesis; peptidoglycan biosynthesis.</text>
</comment>
<comment type="subcellular location">
    <subcellularLocation>
        <location evidence="2">Cytoplasm</location>
    </subcellularLocation>
</comment>
<comment type="similarity">
    <text evidence="2">Belongs to the D-alanine--D-alanine ligase family.</text>
</comment>
<sequence>MKDKHIAVLMGGFSSERSISLSSGAACADVLEEQGYRVSRVDVGAHIASVLEQLQPDIAFNALHGPFGEDGRIQGILEYLKIPYTHSGVMASALAMDKGRAKIIAANAGVCVAPSRIMNRFSIGKTHPMEPPYVIKPVCEGSSFGVVIVQENEAVPPHNIGGSEWGYADEVMVEKYIPGRELTCAVLGNEVLDVCEILPDQHFAFYDYDSKYKTGGSLHICPAKLSLNIYQSVQRMSLAAHQAIGCRGVSRSDFRFDEKTGELVWLEINTQPGMTSTSLLPDIAKASGRTYGDIVQWMVEDASCMR</sequence>
<keyword id="KW-0067">ATP-binding</keyword>
<keyword id="KW-0133">Cell shape</keyword>
<keyword id="KW-0961">Cell wall biogenesis/degradation</keyword>
<keyword id="KW-0963">Cytoplasm</keyword>
<keyword id="KW-0436">Ligase</keyword>
<keyword id="KW-0460">Magnesium</keyword>
<keyword id="KW-0464">Manganese</keyword>
<keyword id="KW-0479">Metal-binding</keyword>
<keyword id="KW-0547">Nucleotide-binding</keyword>
<keyword id="KW-0573">Peptidoglycan synthesis</keyword>
<feature type="chain" id="PRO_1000074763" description="D-alanine--D-alanine ligase">
    <location>
        <begin position="1"/>
        <end position="306"/>
    </location>
</feature>
<feature type="domain" description="ATP-grasp" evidence="2">
    <location>
        <begin position="102"/>
        <end position="300"/>
    </location>
</feature>
<feature type="binding site" evidence="2">
    <location>
        <begin position="128"/>
        <end position="183"/>
    </location>
    <ligand>
        <name>ATP</name>
        <dbReference type="ChEBI" id="CHEBI:30616"/>
    </ligand>
</feature>
<feature type="binding site" evidence="2">
    <location>
        <position position="253"/>
    </location>
    <ligand>
        <name>Mg(2+)</name>
        <dbReference type="ChEBI" id="CHEBI:18420"/>
        <label>1</label>
    </ligand>
</feature>
<feature type="binding site" evidence="2">
    <location>
        <position position="267"/>
    </location>
    <ligand>
        <name>Mg(2+)</name>
        <dbReference type="ChEBI" id="CHEBI:18420"/>
        <label>1</label>
    </ligand>
</feature>
<feature type="binding site" evidence="2">
    <location>
        <position position="267"/>
    </location>
    <ligand>
        <name>Mg(2+)</name>
        <dbReference type="ChEBI" id="CHEBI:18420"/>
        <label>2</label>
    </ligand>
</feature>
<feature type="binding site" evidence="2">
    <location>
        <position position="269"/>
    </location>
    <ligand>
        <name>Mg(2+)</name>
        <dbReference type="ChEBI" id="CHEBI:18420"/>
        <label>2</label>
    </ligand>
</feature>
<proteinExistence type="inferred from homology"/>